<organism>
    <name type="scientific">Chaetosphaeridium globosum</name>
    <name type="common">Charophycean green alga</name>
    <name type="synonym">Herposteiron globosum</name>
    <dbReference type="NCBI Taxonomy" id="96477"/>
    <lineage>
        <taxon>Eukaryota</taxon>
        <taxon>Viridiplantae</taxon>
        <taxon>Streptophyta</taxon>
        <taxon>Coleochaetophyceae</taxon>
        <taxon>Coleochaetales</taxon>
        <taxon>Chaetosphaeridiaceae</taxon>
        <taxon>Chaetosphaeridium</taxon>
    </lineage>
</organism>
<comment type="function">
    <text evidence="1">One of the primary rRNA binding proteins, it binds directly to 16S rRNA where it nucleates assembly of the body of the 30S subunit.</text>
</comment>
<comment type="function">
    <text evidence="1">With S5 and S12 plays an important role in translational accuracy.</text>
</comment>
<comment type="subunit">
    <text evidence="1">Part of the 30S ribosomal subunit. Contacts protein S5. The interaction surface between S4 and S5 is involved in control of translational fidelity (By similarity).</text>
</comment>
<comment type="subcellular location">
    <subcellularLocation>
        <location>Plastid</location>
        <location>Chloroplast</location>
    </subcellularLocation>
</comment>
<comment type="similarity">
    <text evidence="2">Belongs to the universal ribosomal protein uS4 family.</text>
</comment>
<reference key="1">
    <citation type="journal article" date="2002" name="Proc. Natl. Acad. Sci. U.S.A.">
        <title>The chloroplast and mitochondrial genome sequences of the charophyte Chaetosphaeridium globosum: insights into the timing of the events that restructured organelle DNAs within the green algal lineage that led to land plants.</title>
        <authorList>
            <person name="Turmel M."/>
            <person name="Otis C."/>
            <person name="Lemieux C."/>
        </authorList>
    </citation>
    <scope>NUCLEOTIDE SEQUENCE [LARGE SCALE GENOMIC DNA]</scope>
    <source>
        <strain>M1311</strain>
    </source>
</reference>
<feature type="chain" id="PRO_0000132554" description="Small ribosomal subunit protein uS4c">
    <location>
        <begin position="1"/>
        <end position="205"/>
    </location>
</feature>
<feature type="domain" description="S4 RNA-binding">
    <location>
        <begin position="93"/>
        <end position="154"/>
    </location>
</feature>
<geneLocation type="chloroplast"/>
<protein>
    <recommendedName>
        <fullName evidence="2">Small ribosomal subunit protein uS4c</fullName>
    </recommendedName>
    <alternativeName>
        <fullName>30S ribosomal protein S4, chloroplastic</fullName>
    </alternativeName>
</protein>
<proteinExistence type="inferred from homology"/>
<evidence type="ECO:0000250" key="1"/>
<evidence type="ECO:0000305" key="2"/>
<sequence length="205" mass="23662">MSRYRGPRIKIIRRLGILPGLTRKIPKKSMKLRSLSLQSKSKKKDSQYRIRLQEKQKLRYHYGLHERQLLKYVRIARKAKGSTGQVLLQLLEMRLDNTIFRLGMAPTIPAARQLVNHGHILVNGRIVNIPSYRCKPQDSITINTRTQTIALIQQNLGTTRKTKLPSHLMLRSTENSATVKQIVSRQSVGLKINELLVVEYYSRQA</sequence>
<keyword id="KW-0150">Chloroplast</keyword>
<keyword id="KW-0934">Plastid</keyword>
<keyword id="KW-0687">Ribonucleoprotein</keyword>
<keyword id="KW-0689">Ribosomal protein</keyword>
<keyword id="KW-0694">RNA-binding</keyword>
<keyword id="KW-0699">rRNA-binding</keyword>
<accession>Q8M9W2</accession>
<gene>
    <name type="primary">rps4</name>
</gene>
<dbReference type="EMBL" id="AF494278">
    <property type="protein sequence ID" value="AAM96577.1"/>
    <property type="molecule type" value="Genomic_DNA"/>
</dbReference>
<dbReference type="RefSeq" id="NP_683827.1">
    <property type="nucleotide sequence ID" value="NC_004115.1"/>
</dbReference>
<dbReference type="SMR" id="Q8M9W2"/>
<dbReference type="GeneID" id="860733"/>
<dbReference type="GO" id="GO:0009507">
    <property type="term" value="C:chloroplast"/>
    <property type="evidence" value="ECO:0007669"/>
    <property type="project" value="UniProtKB-SubCell"/>
</dbReference>
<dbReference type="GO" id="GO:0015935">
    <property type="term" value="C:small ribosomal subunit"/>
    <property type="evidence" value="ECO:0007669"/>
    <property type="project" value="InterPro"/>
</dbReference>
<dbReference type="GO" id="GO:0019843">
    <property type="term" value="F:rRNA binding"/>
    <property type="evidence" value="ECO:0007669"/>
    <property type="project" value="UniProtKB-UniRule"/>
</dbReference>
<dbReference type="GO" id="GO:0003735">
    <property type="term" value="F:structural constituent of ribosome"/>
    <property type="evidence" value="ECO:0007669"/>
    <property type="project" value="InterPro"/>
</dbReference>
<dbReference type="GO" id="GO:0042274">
    <property type="term" value="P:ribosomal small subunit biogenesis"/>
    <property type="evidence" value="ECO:0007669"/>
    <property type="project" value="TreeGrafter"/>
</dbReference>
<dbReference type="GO" id="GO:0006412">
    <property type="term" value="P:translation"/>
    <property type="evidence" value="ECO:0007669"/>
    <property type="project" value="UniProtKB-UniRule"/>
</dbReference>
<dbReference type="CDD" id="cd00165">
    <property type="entry name" value="S4"/>
    <property type="match status" value="1"/>
</dbReference>
<dbReference type="FunFam" id="1.10.1050.10:FF:000002">
    <property type="entry name" value="30S ribosomal protein S4, chloroplastic"/>
    <property type="match status" value="1"/>
</dbReference>
<dbReference type="FunFam" id="3.10.290.10:FF:000081">
    <property type="entry name" value="30S ribosomal protein S4, chloroplastic"/>
    <property type="match status" value="1"/>
</dbReference>
<dbReference type="Gene3D" id="1.10.1050.10">
    <property type="entry name" value="Ribosomal Protein S4 Delta 41, Chain A, domain 1"/>
    <property type="match status" value="1"/>
</dbReference>
<dbReference type="Gene3D" id="3.10.290.10">
    <property type="entry name" value="RNA-binding S4 domain"/>
    <property type="match status" value="1"/>
</dbReference>
<dbReference type="HAMAP" id="MF_01306_B">
    <property type="entry name" value="Ribosomal_uS4_B"/>
    <property type="match status" value="1"/>
</dbReference>
<dbReference type="InterPro" id="IPR022801">
    <property type="entry name" value="Ribosomal_uS4"/>
</dbReference>
<dbReference type="InterPro" id="IPR005709">
    <property type="entry name" value="Ribosomal_uS4_bac-type"/>
</dbReference>
<dbReference type="InterPro" id="IPR018079">
    <property type="entry name" value="Ribosomal_uS4_CS"/>
</dbReference>
<dbReference type="InterPro" id="IPR001912">
    <property type="entry name" value="Ribosomal_uS4_N"/>
</dbReference>
<dbReference type="InterPro" id="IPR002942">
    <property type="entry name" value="S4_RNA-bd"/>
</dbReference>
<dbReference type="InterPro" id="IPR036986">
    <property type="entry name" value="S4_RNA-bd_sf"/>
</dbReference>
<dbReference type="NCBIfam" id="NF003717">
    <property type="entry name" value="PRK05327.1"/>
    <property type="match status" value="1"/>
</dbReference>
<dbReference type="NCBIfam" id="TIGR01017">
    <property type="entry name" value="rpsD_bact"/>
    <property type="match status" value="1"/>
</dbReference>
<dbReference type="PANTHER" id="PTHR11831">
    <property type="entry name" value="30S 40S RIBOSOMAL PROTEIN"/>
    <property type="match status" value="1"/>
</dbReference>
<dbReference type="PANTHER" id="PTHR11831:SF4">
    <property type="entry name" value="SMALL RIBOSOMAL SUBUNIT PROTEIN US4M"/>
    <property type="match status" value="1"/>
</dbReference>
<dbReference type="Pfam" id="PF00163">
    <property type="entry name" value="Ribosomal_S4"/>
    <property type="match status" value="1"/>
</dbReference>
<dbReference type="Pfam" id="PF01479">
    <property type="entry name" value="S4"/>
    <property type="match status" value="1"/>
</dbReference>
<dbReference type="SMART" id="SM01390">
    <property type="entry name" value="Ribosomal_S4"/>
    <property type="match status" value="1"/>
</dbReference>
<dbReference type="SMART" id="SM00363">
    <property type="entry name" value="S4"/>
    <property type="match status" value="1"/>
</dbReference>
<dbReference type="SUPFAM" id="SSF55174">
    <property type="entry name" value="Alpha-L RNA-binding motif"/>
    <property type="match status" value="1"/>
</dbReference>
<dbReference type="PROSITE" id="PS00632">
    <property type="entry name" value="RIBOSOMAL_S4"/>
    <property type="match status" value="1"/>
</dbReference>
<dbReference type="PROSITE" id="PS50889">
    <property type="entry name" value="S4"/>
    <property type="match status" value="1"/>
</dbReference>
<name>RR4_CHAGL</name>